<sequence length="233" mass="24225">MAKVSKRLAALKATVDRNKLYPVDEAISLVKGAATAKFDESIDVAVNLGVDPRKSDQVVRGSVVLPRGTGKSVRVAVFTQGANAEAAKAAGADIVGFEDLADEVKKGNLNFDVVIASPDAMRIVGQLGQILGPRGLMPNPKVGTVTPNVAEAVKNAKAGQVQYRTDKSGIIHATIGRASFDVEALRENLGALVDALQKAKPAASKGVYLKKIAVSSTMGVGVRVDQVTLVAQA</sequence>
<protein>
    <recommendedName>
        <fullName evidence="1">Large ribosomal subunit protein uL1</fullName>
    </recommendedName>
    <alternativeName>
        <fullName evidence="2">50S ribosomal protein L1</fullName>
    </alternativeName>
</protein>
<evidence type="ECO:0000255" key="1">
    <source>
        <dbReference type="HAMAP-Rule" id="MF_01318"/>
    </source>
</evidence>
<evidence type="ECO:0000305" key="2"/>
<gene>
    <name evidence="1" type="primary">rplA</name>
    <name type="ordered locus">LHK_00243</name>
</gene>
<reference key="1">
    <citation type="journal article" date="2009" name="PLoS Genet.">
        <title>The complete genome and proteome of Laribacter hongkongensis reveal potential mechanisms for adaptations to different temperatures and habitats.</title>
        <authorList>
            <person name="Woo P.C.Y."/>
            <person name="Lau S.K.P."/>
            <person name="Tse H."/>
            <person name="Teng J.L.L."/>
            <person name="Curreem S.O."/>
            <person name="Tsang A.K.L."/>
            <person name="Fan R.Y.Y."/>
            <person name="Wong G.K.M."/>
            <person name="Huang Y."/>
            <person name="Loman N.J."/>
            <person name="Snyder L.A.S."/>
            <person name="Cai J.J."/>
            <person name="Huang J.-D."/>
            <person name="Mak W."/>
            <person name="Pallen M.J."/>
            <person name="Lok S."/>
            <person name="Yuen K.-Y."/>
        </authorList>
    </citation>
    <scope>NUCLEOTIDE SEQUENCE [LARGE SCALE GENOMIC DNA]</scope>
    <source>
        <strain>HLHK9</strain>
    </source>
</reference>
<name>RL1_LARHH</name>
<feature type="chain" id="PRO_1000165685" description="Large ribosomal subunit protein uL1">
    <location>
        <begin position="1"/>
        <end position="233"/>
    </location>
</feature>
<organism>
    <name type="scientific">Laribacter hongkongensis (strain HLHK9)</name>
    <dbReference type="NCBI Taxonomy" id="557598"/>
    <lineage>
        <taxon>Bacteria</taxon>
        <taxon>Pseudomonadati</taxon>
        <taxon>Pseudomonadota</taxon>
        <taxon>Betaproteobacteria</taxon>
        <taxon>Neisseriales</taxon>
        <taxon>Aquaspirillaceae</taxon>
        <taxon>Laribacter</taxon>
    </lineage>
</organism>
<proteinExistence type="inferred from homology"/>
<accession>C1DAQ7</accession>
<comment type="function">
    <text evidence="1">Binds directly to 23S rRNA. The L1 stalk is quite mobile in the ribosome, and is involved in E site tRNA release.</text>
</comment>
<comment type="function">
    <text evidence="1">Protein L1 is also a translational repressor protein, it controls the translation of the L11 operon by binding to its mRNA.</text>
</comment>
<comment type="subunit">
    <text evidence="1">Part of the 50S ribosomal subunit.</text>
</comment>
<comment type="similarity">
    <text evidence="1">Belongs to the universal ribosomal protein uL1 family.</text>
</comment>
<dbReference type="EMBL" id="CP001154">
    <property type="protein sequence ID" value="ACO73238.1"/>
    <property type="molecule type" value="Genomic_DNA"/>
</dbReference>
<dbReference type="RefSeq" id="WP_012695733.1">
    <property type="nucleotide sequence ID" value="NC_012559.1"/>
</dbReference>
<dbReference type="SMR" id="C1DAQ7"/>
<dbReference type="STRING" id="557598.LHK_00243"/>
<dbReference type="GeneID" id="75110363"/>
<dbReference type="KEGG" id="lhk:LHK_00243"/>
<dbReference type="eggNOG" id="COG0081">
    <property type="taxonomic scope" value="Bacteria"/>
</dbReference>
<dbReference type="HOGENOM" id="CLU_062853_0_0_4"/>
<dbReference type="Proteomes" id="UP000002010">
    <property type="component" value="Chromosome"/>
</dbReference>
<dbReference type="GO" id="GO:0022625">
    <property type="term" value="C:cytosolic large ribosomal subunit"/>
    <property type="evidence" value="ECO:0007669"/>
    <property type="project" value="TreeGrafter"/>
</dbReference>
<dbReference type="GO" id="GO:0019843">
    <property type="term" value="F:rRNA binding"/>
    <property type="evidence" value="ECO:0007669"/>
    <property type="project" value="UniProtKB-UniRule"/>
</dbReference>
<dbReference type="GO" id="GO:0003735">
    <property type="term" value="F:structural constituent of ribosome"/>
    <property type="evidence" value="ECO:0007669"/>
    <property type="project" value="InterPro"/>
</dbReference>
<dbReference type="GO" id="GO:0000049">
    <property type="term" value="F:tRNA binding"/>
    <property type="evidence" value="ECO:0007669"/>
    <property type="project" value="UniProtKB-KW"/>
</dbReference>
<dbReference type="GO" id="GO:0006417">
    <property type="term" value="P:regulation of translation"/>
    <property type="evidence" value="ECO:0007669"/>
    <property type="project" value="UniProtKB-KW"/>
</dbReference>
<dbReference type="GO" id="GO:0006412">
    <property type="term" value="P:translation"/>
    <property type="evidence" value="ECO:0007669"/>
    <property type="project" value="UniProtKB-UniRule"/>
</dbReference>
<dbReference type="CDD" id="cd00403">
    <property type="entry name" value="Ribosomal_L1"/>
    <property type="match status" value="1"/>
</dbReference>
<dbReference type="FunFam" id="3.40.50.790:FF:000001">
    <property type="entry name" value="50S ribosomal protein L1"/>
    <property type="match status" value="1"/>
</dbReference>
<dbReference type="Gene3D" id="3.30.190.20">
    <property type="match status" value="1"/>
</dbReference>
<dbReference type="Gene3D" id="3.40.50.790">
    <property type="match status" value="1"/>
</dbReference>
<dbReference type="HAMAP" id="MF_01318_B">
    <property type="entry name" value="Ribosomal_uL1_B"/>
    <property type="match status" value="1"/>
</dbReference>
<dbReference type="InterPro" id="IPR005878">
    <property type="entry name" value="Ribosom_uL1_bac-type"/>
</dbReference>
<dbReference type="InterPro" id="IPR002143">
    <property type="entry name" value="Ribosomal_uL1"/>
</dbReference>
<dbReference type="InterPro" id="IPR023674">
    <property type="entry name" value="Ribosomal_uL1-like"/>
</dbReference>
<dbReference type="InterPro" id="IPR028364">
    <property type="entry name" value="Ribosomal_uL1/biogenesis"/>
</dbReference>
<dbReference type="InterPro" id="IPR016095">
    <property type="entry name" value="Ribosomal_uL1_3-a/b-sand"/>
</dbReference>
<dbReference type="InterPro" id="IPR023673">
    <property type="entry name" value="Ribosomal_uL1_CS"/>
</dbReference>
<dbReference type="NCBIfam" id="TIGR01169">
    <property type="entry name" value="rplA_bact"/>
    <property type="match status" value="1"/>
</dbReference>
<dbReference type="PANTHER" id="PTHR36427">
    <property type="entry name" value="54S RIBOSOMAL PROTEIN L1, MITOCHONDRIAL"/>
    <property type="match status" value="1"/>
</dbReference>
<dbReference type="PANTHER" id="PTHR36427:SF3">
    <property type="entry name" value="LARGE RIBOSOMAL SUBUNIT PROTEIN UL1M"/>
    <property type="match status" value="1"/>
</dbReference>
<dbReference type="Pfam" id="PF00687">
    <property type="entry name" value="Ribosomal_L1"/>
    <property type="match status" value="1"/>
</dbReference>
<dbReference type="PIRSF" id="PIRSF002155">
    <property type="entry name" value="Ribosomal_L1"/>
    <property type="match status" value="1"/>
</dbReference>
<dbReference type="SUPFAM" id="SSF56808">
    <property type="entry name" value="Ribosomal protein L1"/>
    <property type="match status" value="1"/>
</dbReference>
<dbReference type="PROSITE" id="PS01199">
    <property type="entry name" value="RIBOSOMAL_L1"/>
    <property type="match status" value="1"/>
</dbReference>
<keyword id="KW-1185">Reference proteome</keyword>
<keyword id="KW-0678">Repressor</keyword>
<keyword id="KW-0687">Ribonucleoprotein</keyword>
<keyword id="KW-0689">Ribosomal protein</keyword>
<keyword id="KW-0694">RNA-binding</keyword>
<keyword id="KW-0699">rRNA-binding</keyword>
<keyword id="KW-0810">Translation regulation</keyword>
<keyword id="KW-0820">tRNA-binding</keyword>